<gene>
    <name evidence="1" type="primary">nanE</name>
    <name type="ordered locus">ECDH10B_3400</name>
</gene>
<keyword id="KW-0119">Carbohydrate metabolism</keyword>
<keyword id="KW-0413">Isomerase</keyword>
<accession>B1XHJ6</accession>
<reference key="1">
    <citation type="journal article" date="2008" name="J. Bacteriol.">
        <title>The complete genome sequence of Escherichia coli DH10B: insights into the biology of a laboratory workhorse.</title>
        <authorList>
            <person name="Durfee T."/>
            <person name="Nelson R."/>
            <person name="Baldwin S."/>
            <person name="Plunkett G. III"/>
            <person name="Burland V."/>
            <person name="Mau B."/>
            <person name="Petrosino J.F."/>
            <person name="Qin X."/>
            <person name="Muzny D.M."/>
            <person name="Ayele M."/>
            <person name="Gibbs R.A."/>
            <person name="Csorgo B."/>
            <person name="Posfai G."/>
            <person name="Weinstock G.M."/>
            <person name="Blattner F.R."/>
        </authorList>
    </citation>
    <scope>NUCLEOTIDE SEQUENCE [LARGE SCALE GENOMIC DNA]</scope>
    <source>
        <strain>K12 / DH10B</strain>
    </source>
</reference>
<feature type="chain" id="PRO_1000139707" description="Putative N-acetylmannosamine-6-phosphate 2-epimerase">
    <location>
        <begin position="1"/>
        <end position="229"/>
    </location>
</feature>
<dbReference type="EC" id="5.1.3.9" evidence="1"/>
<dbReference type="EMBL" id="CP000948">
    <property type="protein sequence ID" value="ACB04297.1"/>
    <property type="molecule type" value="Genomic_DNA"/>
</dbReference>
<dbReference type="RefSeq" id="WP_000054239.1">
    <property type="nucleotide sequence ID" value="NC_010473.1"/>
</dbReference>
<dbReference type="SMR" id="B1XHJ6"/>
<dbReference type="KEGG" id="ecd:ECDH10B_3400"/>
<dbReference type="HOGENOM" id="CLU_086300_0_0_6"/>
<dbReference type="UniPathway" id="UPA00629">
    <property type="reaction ID" value="UER00682"/>
</dbReference>
<dbReference type="GO" id="GO:0005829">
    <property type="term" value="C:cytosol"/>
    <property type="evidence" value="ECO:0007669"/>
    <property type="project" value="TreeGrafter"/>
</dbReference>
<dbReference type="GO" id="GO:0047465">
    <property type="term" value="F:N-acylglucosamine-6-phosphate 2-epimerase activity"/>
    <property type="evidence" value="ECO:0007669"/>
    <property type="project" value="UniProtKB-EC"/>
</dbReference>
<dbReference type="GO" id="GO:0005975">
    <property type="term" value="P:carbohydrate metabolic process"/>
    <property type="evidence" value="ECO:0007669"/>
    <property type="project" value="UniProtKB-UniRule"/>
</dbReference>
<dbReference type="GO" id="GO:0006053">
    <property type="term" value="P:N-acetylmannosamine catabolic process"/>
    <property type="evidence" value="ECO:0007669"/>
    <property type="project" value="TreeGrafter"/>
</dbReference>
<dbReference type="GO" id="GO:0019262">
    <property type="term" value="P:N-acetylneuraminate catabolic process"/>
    <property type="evidence" value="ECO:0007669"/>
    <property type="project" value="UniProtKB-UniRule"/>
</dbReference>
<dbReference type="CDD" id="cd04729">
    <property type="entry name" value="NanE"/>
    <property type="match status" value="1"/>
</dbReference>
<dbReference type="FunFam" id="3.20.20.70:FF:000035">
    <property type="entry name" value="Putative N-acetylmannosamine-6-phosphate 2-epimerase"/>
    <property type="match status" value="1"/>
</dbReference>
<dbReference type="Gene3D" id="3.20.20.70">
    <property type="entry name" value="Aldolase class I"/>
    <property type="match status" value="1"/>
</dbReference>
<dbReference type="HAMAP" id="MF_01235">
    <property type="entry name" value="ManNAc6P_epimer"/>
    <property type="match status" value="1"/>
</dbReference>
<dbReference type="InterPro" id="IPR013785">
    <property type="entry name" value="Aldolase_TIM"/>
</dbReference>
<dbReference type="InterPro" id="IPR007260">
    <property type="entry name" value="NanE"/>
</dbReference>
<dbReference type="InterPro" id="IPR011060">
    <property type="entry name" value="RibuloseP-bd_barrel"/>
</dbReference>
<dbReference type="NCBIfam" id="NF002231">
    <property type="entry name" value="PRK01130.1"/>
    <property type="match status" value="1"/>
</dbReference>
<dbReference type="PANTHER" id="PTHR36204">
    <property type="entry name" value="N-ACETYLMANNOSAMINE-6-PHOSPHATE 2-EPIMERASE-RELATED"/>
    <property type="match status" value="1"/>
</dbReference>
<dbReference type="PANTHER" id="PTHR36204:SF1">
    <property type="entry name" value="N-ACETYLMANNOSAMINE-6-PHOSPHATE 2-EPIMERASE-RELATED"/>
    <property type="match status" value="1"/>
</dbReference>
<dbReference type="Pfam" id="PF04131">
    <property type="entry name" value="NanE"/>
    <property type="match status" value="1"/>
</dbReference>
<dbReference type="SUPFAM" id="SSF51366">
    <property type="entry name" value="Ribulose-phoshate binding barrel"/>
    <property type="match status" value="1"/>
</dbReference>
<comment type="function">
    <text evidence="1">Converts N-acetylmannosamine-6-phosphate (ManNAc-6-P) to N-acetylglucosamine-6-phosphate (GlcNAc-6-P).</text>
</comment>
<comment type="catalytic activity">
    <reaction evidence="1">
        <text>an N-acyl-D-glucosamine 6-phosphate = an N-acyl-D-mannosamine 6-phosphate</text>
        <dbReference type="Rhea" id="RHEA:23932"/>
        <dbReference type="ChEBI" id="CHEBI:57599"/>
        <dbReference type="ChEBI" id="CHEBI:57666"/>
        <dbReference type="EC" id="5.1.3.9"/>
    </reaction>
</comment>
<comment type="pathway">
    <text evidence="1">Amino-sugar metabolism; N-acetylneuraminate degradation; D-fructose 6-phosphate from N-acetylneuraminate: step 3/5.</text>
</comment>
<comment type="similarity">
    <text evidence="1">Belongs to the NanE family.</text>
</comment>
<evidence type="ECO:0000255" key="1">
    <source>
        <dbReference type="HAMAP-Rule" id="MF_01235"/>
    </source>
</evidence>
<protein>
    <recommendedName>
        <fullName evidence="1">Putative N-acetylmannosamine-6-phosphate 2-epimerase</fullName>
        <ecNumber evidence="1">5.1.3.9</ecNumber>
    </recommendedName>
    <alternativeName>
        <fullName evidence="1">ManNAc-6-P epimerase</fullName>
    </alternativeName>
</protein>
<proteinExistence type="inferred from homology"/>
<sequence length="229" mass="24074">MSLLAQLDQKIAANGGLIVSCQPVPDSPLDKPEIVAAMALAAEQAGAVAIRIEGVANLQATRAVVSVPIIGIVKRDLEDSPVRITAYIEDVDALAQAGADIIAIDGTDRPRPVPVETLLARIHHHGLLAMTDCSTPEDGLACQKLGAEIIGTTLSGYTTPETPEEPDLALVKTLSDAGCRVIAEGRYNTPAQAADAMRHGAWAVTVGSAITRLEHICQWYNTAMKKAVL</sequence>
<organism>
    <name type="scientific">Escherichia coli (strain K12 / DH10B)</name>
    <dbReference type="NCBI Taxonomy" id="316385"/>
    <lineage>
        <taxon>Bacteria</taxon>
        <taxon>Pseudomonadati</taxon>
        <taxon>Pseudomonadota</taxon>
        <taxon>Gammaproteobacteria</taxon>
        <taxon>Enterobacterales</taxon>
        <taxon>Enterobacteriaceae</taxon>
        <taxon>Escherichia</taxon>
    </lineage>
</organism>
<name>NANE_ECODH</name>